<dbReference type="EMBL" id="FM200053">
    <property type="protein sequence ID" value="CAR61288.1"/>
    <property type="molecule type" value="Genomic_DNA"/>
</dbReference>
<dbReference type="RefSeq" id="WP_000462905.1">
    <property type="nucleotide sequence ID" value="NC_011147.1"/>
</dbReference>
<dbReference type="SMR" id="B5BGT9"/>
<dbReference type="GeneID" id="98390389"/>
<dbReference type="KEGG" id="sek:SSPA3038"/>
<dbReference type="HOGENOM" id="CLU_158040_3_0_6"/>
<dbReference type="Proteomes" id="UP000001869">
    <property type="component" value="Chromosome"/>
</dbReference>
<dbReference type="GO" id="GO:0003700">
    <property type="term" value="F:DNA-binding transcription factor activity"/>
    <property type="evidence" value="ECO:0007669"/>
    <property type="project" value="UniProtKB-UniRule"/>
</dbReference>
<dbReference type="GO" id="GO:0043565">
    <property type="term" value="F:sequence-specific DNA binding"/>
    <property type="evidence" value="ECO:0007669"/>
    <property type="project" value="InterPro"/>
</dbReference>
<dbReference type="FunFam" id="1.10.10.60:FF:000006">
    <property type="entry name" value="DNA-binding protein Fis"/>
    <property type="match status" value="1"/>
</dbReference>
<dbReference type="Gene3D" id="1.10.10.60">
    <property type="entry name" value="Homeodomain-like"/>
    <property type="match status" value="1"/>
</dbReference>
<dbReference type="HAMAP" id="MF_00166">
    <property type="entry name" value="DNA_binding_Fis"/>
    <property type="match status" value="1"/>
</dbReference>
<dbReference type="InterPro" id="IPR005412">
    <property type="entry name" value="Fis_DNA-bd"/>
</dbReference>
<dbReference type="InterPro" id="IPR009057">
    <property type="entry name" value="Homeodomain-like_sf"/>
</dbReference>
<dbReference type="InterPro" id="IPR002197">
    <property type="entry name" value="HTH_Fis"/>
</dbReference>
<dbReference type="InterPro" id="IPR050207">
    <property type="entry name" value="Trans_regulatory_Fis"/>
</dbReference>
<dbReference type="NCBIfam" id="NF001659">
    <property type="entry name" value="PRK00430.1"/>
    <property type="match status" value="1"/>
</dbReference>
<dbReference type="PANTHER" id="PTHR47918">
    <property type="entry name" value="DNA-BINDING PROTEIN FIS"/>
    <property type="match status" value="1"/>
</dbReference>
<dbReference type="PANTHER" id="PTHR47918:SF1">
    <property type="entry name" value="DNA-BINDING PROTEIN FIS"/>
    <property type="match status" value="1"/>
</dbReference>
<dbReference type="Pfam" id="PF02954">
    <property type="entry name" value="HTH_8"/>
    <property type="match status" value="1"/>
</dbReference>
<dbReference type="PIRSF" id="PIRSF002097">
    <property type="entry name" value="DNA-binding_Fis"/>
    <property type="match status" value="1"/>
</dbReference>
<dbReference type="PRINTS" id="PR01591">
    <property type="entry name" value="DNABINDNGFIS"/>
</dbReference>
<dbReference type="PRINTS" id="PR01590">
    <property type="entry name" value="HTHFIS"/>
</dbReference>
<dbReference type="SUPFAM" id="SSF46689">
    <property type="entry name" value="Homeodomain-like"/>
    <property type="match status" value="1"/>
</dbReference>
<proteinExistence type="inferred from homology"/>
<accession>B5BGT9</accession>
<name>FIS_SALPK</name>
<keyword id="KW-0010">Activator</keyword>
<keyword id="KW-0238">DNA-binding</keyword>
<keyword id="KW-0804">Transcription</keyword>
<keyword id="KW-0805">Transcription regulation</keyword>
<protein>
    <recommendedName>
        <fullName evidence="1">DNA-binding protein Fis</fullName>
    </recommendedName>
</protein>
<comment type="function">
    <text evidence="1">Activates ribosomal RNA transcription. Plays a direct role in upstream activation of rRNA promoters.</text>
</comment>
<comment type="subunit">
    <text evidence="1">Homodimer.</text>
</comment>
<comment type="similarity">
    <text evidence="1">Belongs to the transcriptional regulatory Fis family.</text>
</comment>
<sequence length="98" mass="11240">MFEQRVNSDVLTVSTVNSQDQVTQKPLRDSVKQALKNYFAQLNGQDVNDLYELVLAEVEQPLLDMVMQYTRGNQTRAALMMGINRGTLRKKLKKYGMN</sequence>
<organism>
    <name type="scientific">Salmonella paratyphi A (strain AKU_12601)</name>
    <dbReference type="NCBI Taxonomy" id="554290"/>
    <lineage>
        <taxon>Bacteria</taxon>
        <taxon>Pseudomonadati</taxon>
        <taxon>Pseudomonadota</taxon>
        <taxon>Gammaproteobacteria</taxon>
        <taxon>Enterobacterales</taxon>
        <taxon>Enterobacteriaceae</taxon>
        <taxon>Salmonella</taxon>
    </lineage>
</organism>
<reference key="1">
    <citation type="journal article" date="2009" name="BMC Genomics">
        <title>Pseudogene accumulation in the evolutionary histories of Salmonella enterica serovars Paratyphi A and Typhi.</title>
        <authorList>
            <person name="Holt K.E."/>
            <person name="Thomson N.R."/>
            <person name="Wain J."/>
            <person name="Langridge G.C."/>
            <person name="Hasan R."/>
            <person name="Bhutta Z.A."/>
            <person name="Quail M.A."/>
            <person name="Norbertczak H."/>
            <person name="Walker D."/>
            <person name="Simmonds M."/>
            <person name="White B."/>
            <person name="Bason N."/>
            <person name="Mungall K."/>
            <person name="Dougan G."/>
            <person name="Parkhill J."/>
        </authorList>
    </citation>
    <scope>NUCLEOTIDE SEQUENCE [LARGE SCALE GENOMIC DNA]</scope>
    <source>
        <strain>AKU_12601</strain>
    </source>
</reference>
<gene>
    <name evidence="1" type="primary">fis</name>
    <name type="ordered locus">SSPA3038</name>
</gene>
<evidence type="ECO:0000255" key="1">
    <source>
        <dbReference type="HAMAP-Rule" id="MF_00166"/>
    </source>
</evidence>
<feature type="chain" id="PRO_1000097463" description="DNA-binding protein Fis">
    <location>
        <begin position="1"/>
        <end position="98"/>
    </location>
</feature>
<feature type="DNA-binding region" description="H-T-H motif" evidence="1">
    <location>
        <begin position="74"/>
        <end position="93"/>
    </location>
</feature>